<organism>
    <name type="scientific">Micromonospora griseorubida</name>
    <dbReference type="NCBI Taxonomy" id="28040"/>
    <lineage>
        <taxon>Bacteria</taxon>
        <taxon>Bacillati</taxon>
        <taxon>Actinomycetota</taxon>
        <taxon>Actinomycetes</taxon>
        <taxon>Micromonosporales</taxon>
        <taxon>Micromonosporaceae</taxon>
        <taxon>Micromonospora</taxon>
    </lineage>
</organism>
<dbReference type="EC" id="1.14.-.-" evidence="2"/>
<dbReference type="EMBL" id="AB089954">
    <property type="protein sequence ID" value="BAC57023.2"/>
    <property type="status" value="ALT_INIT"/>
    <property type="molecule type" value="Genomic_DNA"/>
</dbReference>
<dbReference type="PDB" id="5FOI">
    <property type="method" value="X-ray"/>
    <property type="resolution" value="2.21 A"/>
    <property type="chains" value="A/B=1-388"/>
</dbReference>
<dbReference type="PDBsum" id="5FOI"/>
<dbReference type="SMR" id="Q83WF5"/>
<dbReference type="KEGG" id="ag:BAC57023"/>
<dbReference type="BioCyc" id="MetaCyc:MONOMER-18365"/>
<dbReference type="UniPathway" id="UPA01019"/>
<dbReference type="GO" id="GO:0020037">
    <property type="term" value="F:heme binding"/>
    <property type="evidence" value="ECO:0007669"/>
    <property type="project" value="InterPro"/>
</dbReference>
<dbReference type="GO" id="GO:0005506">
    <property type="term" value="F:iron ion binding"/>
    <property type="evidence" value="ECO:0007669"/>
    <property type="project" value="InterPro"/>
</dbReference>
<dbReference type="GO" id="GO:0004497">
    <property type="term" value="F:monooxygenase activity"/>
    <property type="evidence" value="ECO:0000314"/>
    <property type="project" value="UniProtKB"/>
</dbReference>
<dbReference type="GO" id="GO:0016705">
    <property type="term" value="F:oxidoreductase activity, acting on paired donors, with incorporation or reduction of molecular oxygen"/>
    <property type="evidence" value="ECO:0007669"/>
    <property type="project" value="InterPro"/>
</dbReference>
<dbReference type="GO" id="GO:0017000">
    <property type="term" value="P:antibiotic biosynthetic process"/>
    <property type="evidence" value="ECO:0000314"/>
    <property type="project" value="UniProtKB"/>
</dbReference>
<dbReference type="CDD" id="cd11030">
    <property type="entry name" value="CYP105-like"/>
    <property type="match status" value="1"/>
</dbReference>
<dbReference type="FunFam" id="1.10.630.10:FF:000018">
    <property type="entry name" value="Cytochrome P450 monooxygenase"/>
    <property type="match status" value="1"/>
</dbReference>
<dbReference type="Gene3D" id="1.10.630.10">
    <property type="entry name" value="Cytochrome P450"/>
    <property type="match status" value="1"/>
</dbReference>
<dbReference type="InterPro" id="IPR001128">
    <property type="entry name" value="Cyt_P450"/>
</dbReference>
<dbReference type="InterPro" id="IPR002397">
    <property type="entry name" value="Cyt_P450_B"/>
</dbReference>
<dbReference type="InterPro" id="IPR017972">
    <property type="entry name" value="Cyt_P450_CS"/>
</dbReference>
<dbReference type="InterPro" id="IPR036396">
    <property type="entry name" value="Cyt_P450_sf"/>
</dbReference>
<dbReference type="PANTHER" id="PTHR46696:SF1">
    <property type="entry name" value="CYTOCHROME P450 YJIB-RELATED"/>
    <property type="match status" value="1"/>
</dbReference>
<dbReference type="PANTHER" id="PTHR46696">
    <property type="entry name" value="P450, PUTATIVE (EUROFUNG)-RELATED"/>
    <property type="match status" value="1"/>
</dbReference>
<dbReference type="Pfam" id="PF00067">
    <property type="entry name" value="p450"/>
    <property type="match status" value="1"/>
</dbReference>
<dbReference type="PRINTS" id="PR00359">
    <property type="entry name" value="BP450"/>
</dbReference>
<dbReference type="PRINTS" id="PR00385">
    <property type="entry name" value="P450"/>
</dbReference>
<dbReference type="SUPFAM" id="SSF48264">
    <property type="entry name" value="Cytochrome P450"/>
    <property type="match status" value="1"/>
</dbReference>
<dbReference type="PROSITE" id="PS00086">
    <property type="entry name" value="CYTOCHROME_P450"/>
    <property type="match status" value="1"/>
</dbReference>
<reference key="1">
    <citation type="journal article" date="2003" name="FEMS Microbiol. Lett.">
        <title>Organization of the biosynthetic gene cluster for the polyketide macrolide mycinamicin in Micromonospora griseorubida.</title>
        <authorList>
            <person name="Anzai Y."/>
            <person name="Saito N."/>
            <person name="Tanaka M."/>
            <person name="Kinoshita K."/>
            <person name="Koyama Y."/>
            <person name="Kato F."/>
        </authorList>
    </citation>
    <scope>NUCLEOTIDE SEQUENCE [GENOMIC DNA]</scope>
</reference>
<reference key="2">
    <citation type="journal article" date="2008" name="Chem. Biol.">
        <title>Functional analysis of MycCI and MycG, cytochrome P450 enzymes involved in biosynthesis of mycinamicin macrolide antibiotics.</title>
        <authorList>
            <person name="Anzai Y."/>
            <person name="Li S."/>
            <person name="Chaulagain M.R."/>
            <person name="Kinoshita K."/>
            <person name="Kato F."/>
            <person name="Montgomery J."/>
            <person name="Sherman D.H."/>
        </authorList>
    </citation>
    <scope>FUNCTION</scope>
    <scope>CATALYTIC ACTIVITY</scope>
    <scope>SUBSTRATE SPECIFICITY</scope>
    <scope>BIOPHYSICOCHEMICAL PROPERTIES</scope>
    <scope>PATHWAY</scope>
</reference>
<reference key="3">
    <citation type="journal article" date="2012" name="Antimicrob. Agents Chemother.">
        <title>Function of cytochrome P450 enzymes MycCI and MycG in Micromonospora griseorubida, a producer of the macrolide antibiotic mycinamicin.</title>
        <authorList>
            <person name="Anzai Y."/>
            <person name="Tsukada S."/>
            <person name="Sakai A."/>
            <person name="Masuda R."/>
            <person name="Harada C."/>
            <person name="Domeki A."/>
            <person name="Li S."/>
            <person name="Kinoshita K."/>
            <person name="Sherman D.H."/>
            <person name="Kato F."/>
        </authorList>
    </citation>
    <scope>FUNCTION</scope>
    <scope>DISRUPTION PHENOTYPE</scope>
    <scope>PATHWAY</scope>
    <source>
        <strain>A11725</strain>
    </source>
</reference>
<accession>Q83WF5</accession>
<keyword id="KW-0002">3D-structure</keyword>
<keyword id="KW-0045">Antibiotic biosynthesis</keyword>
<keyword id="KW-0349">Heme</keyword>
<keyword id="KW-0408">Iron</keyword>
<keyword id="KW-0479">Metal-binding</keyword>
<keyword id="KW-0503">Monooxygenase</keyword>
<keyword id="KW-0521">NADP</keyword>
<keyword id="KW-0560">Oxidoreductase</keyword>
<feature type="chain" id="PRO_0000434764" description="Mycinamicin VIII C21 methyl hydroxylase">
    <location>
        <begin position="1"/>
        <end position="388"/>
    </location>
</feature>
<feature type="binding site" evidence="1">
    <location>
        <position position="87"/>
    </location>
    <ligand>
        <name>heme</name>
        <dbReference type="ChEBI" id="CHEBI:30413"/>
    </ligand>
</feature>
<feature type="binding site" evidence="1">
    <location>
        <position position="91"/>
    </location>
    <ligand>
        <name>heme</name>
        <dbReference type="ChEBI" id="CHEBI:30413"/>
    </ligand>
</feature>
<feature type="binding site" evidence="1">
    <location>
        <position position="279"/>
    </location>
    <ligand>
        <name>heme</name>
        <dbReference type="ChEBI" id="CHEBI:30413"/>
    </ligand>
</feature>
<feature type="binding site" evidence="1">
    <location>
        <position position="335"/>
    </location>
    <ligand>
        <name>heme</name>
        <dbReference type="ChEBI" id="CHEBI:30413"/>
    </ligand>
</feature>
<feature type="binding site" description="axial binding residue" evidence="1">
    <location>
        <position position="337"/>
    </location>
    <ligand>
        <name>heme</name>
        <dbReference type="ChEBI" id="CHEBI:30413"/>
    </ligand>
    <ligandPart>
        <name>Fe</name>
        <dbReference type="ChEBI" id="CHEBI:18248"/>
    </ligandPart>
</feature>
<feature type="strand" evidence="9">
    <location>
        <begin position="2"/>
        <end position="4"/>
    </location>
</feature>
<feature type="strand" evidence="9">
    <location>
        <begin position="10"/>
        <end position="12"/>
    </location>
</feature>
<feature type="helix" evidence="9">
    <location>
        <begin position="17"/>
        <end position="21"/>
    </location>
</feature>
<feature type="strand" evidence="9">
    <location>
        <begin position="24"/>
        <end position="26"/>
    </location>
</feature>
<feature type="strand" evidence="9">
    <location>
        <begin position="28"/>
        <end position="31"/>
    </location>
</feature>
<feature type="strand" evidence="9">
    <location>
        <begin position="38"/>
        <end position="41"/>
    </location>
</feature>
<feature type="helix" evidence="9">
    <location>
        <begin position="44"/>
        <end position="51"/>
    </location>
</feature>
<feature type="helix" evidence="9">
    <location>
        <begin position="60"/>
        <end position="62"/>
    </location>
</feature>
<feature type="helix" evidence="9">
    <location>
        <begin position="79"/>
        <end position="81"/>
    </location>
</feature>
<feature type="helix" evidence="9">
    <location>
        <begin position="86"/>
        <end position="94"/>
    </location>
</feature>
<feature type="helix" evidence="9">
    <location>
        <begin position="95"/>
        <end position="98"/>
    </location>
</feature>
<feature type="helix" evidence="9">
    <location>
        <begin position="100"/>
        <end position="103"/>
    </location>
</feature>
<feature type="helix" evidence="9">
    <location>
        <begin position="104"/>
        <end position="106"/>
    </location>
</feature>
<feature type="helix" evidence="9">
    <location>
        <begin position="107"/>
        <end position="122"/>
    </location>
</feature>
<feature type="helix" evidence="9">
    <location>
        <begin position="130"/>
        <end position="133"/>
    </location>
</feature>
<feature type="helix" evidence="9">
    <location>
        <begin position="135"/>
        <end position="147"/>
    </location>
</feature>
<feature type="helix" evidence="9">
    <location>
        <begin position="151"/>
        <end position="153"/>
    </location>
</feature>
<feature type="helix" evidence="9">
    <location>
        <begin position="154"/>
        <end position="164"/>
    </location>
</feature>
<feature type="helix" evidence="9">
    <location>
        <begin position="172"/>
        <end position="192"/>
    </location>
</feature>
<feature type="helix" evidence="9">
    <location>
        <begin position="198"/>
        <end position="205"/>
    </location>
</feature>
<feature type="turn" evidence="9">
    <location>
        <begin position="206"/>
        <end position="210"/>
    </location>
</feature>
<feature type="helix" evidence="9">
    <location>
        <begin position="214"/>
        <end position="245"/>
    </location>
</feature>
<feature type="helix" evidence="9">
    <location>
        <begin position="247"/>
        <end position="255"/>
    </location>
</feature>
<feature type="helix" evidence="9">
    <location>
        <begin position="257"/>
        <end position="259"/>
    </location>
</feature>
<feature type="helix" evidence="9">
    <location>
        <begin position="260"/>
        <end position="271"/>
    </location>
</feature>
<feature type="strand" evidence="9">
    <location>
        <begin position="277"/>
        <end position="283"/>
    </location>
</feature>
<feature type="strand" evidence="9">
    <location>
        <begin position="285"/>
        <end position="287"/>
    </location>
</feature>
<feature type="strand" evidence="9">
    <location>
        <begin position="290"/>
        <end position="292"/>
    </location>
</feature>
<feature type="strand" evidence="9">
    <location>
        <begin position="297"/>
        <end position="300"/>
    </location>
</feature>
<feature type="helix" evidence="9">
    <location>
        <begin position="302"/>
        <end position="306"/>
    </location>
</feature>
<feature type="turn" evidence="9">
    <location>
        <begin position="309"/>
        <end position="311"/>
    </location>
</feature>
<feature type="turn" evidence="9">
    <location>
        <begin position="313"/>
        <end position="316"/>
    </location>
</feature>
<feature type="helix" evidence="9">
    <location>
        <begin position="340"/>
        <end position="357"/>
    </location>
</feature>
<feature type="strand" evidence="9">
    <location>
        <begin position="362"/>
        <end position="365"/>
    </location>
</feature>
<feature type="strand" evidence="9">
    <location>
        <begin position="375"/>
        <end position="378"/>
    </location>
</feature>
<feature type="strand" evidence="9">
    <location>
        <begin position="385"/>
        <end position="387"/>
    </location>
</feature>
<gene>
    <name evidence="4" type="primary">mycCI</name>
</gene>
<comment type="function">
    <text evidence="2 3">Involved in the biosynthesis of mycinamicin, a 16-membered macrolide antibiotic. Catalyzes hydroxylation at the C21 methyl group of mycinamicin VIII, the earliest macrolide form in the postpolyketide synthase tailoring pathway, leading to mycinamicin VII. Uses ferredoxin MycCII in electron transfer for catalysis.</text>
</comment>
<comment type="cofactor">
    <cofactor evidence="1">
        <name>heme</name>
        <dbReference type="ChEBI" id="CHEBI:30413"/>
    </cofactor>
</comment>
<comment type="biophysicochemical properties">
    <kinetics>
        <KM evidence="2">34.5 uM for mycinamicin VIII (in the presence of spinach ferredoxin)</KM>
        <KM evidence="2">5.8 uM for mycinamicin VIII (in the presence of MycCII ferredoxin)</KM>
        <text evidence="2">kcat is 71.7 min(-1) in the presence of spinach ferredoxin. kcat is 104.1 min(-1) in the presence of MycCII ferredoxin.</text>
    </kinetics>
</comment>
<comment type="pathway">
    <text evidence="3 8">Antibiotic biosynthesis; mycinamicin biosynthesis.</text>
</comment>
<comment type="disruption phenotype">
    <text evidence="3">Cells lacking this gene accumulate protomycinolide IV and mycinamicin VIII.</text>
</comment>
<comment type="similarity">
    <text evidence="6">Belongs to the cytochrome P450 family.</text>
</comment>
<comment type="sequence caution" evidence="6">
    <conflict type="erroneous initiation">
        <sequence resource="EMBL-CDS" id="BAC57023"/>
    </conflict>
    <text>Truncated N-terminus.</text>
</comment>
<protein>
    <recommendedName>
        <fullName evidence="5">Mycinamicin VIII C21 methyl hydroxylase</fullName>
        <ecNumber evidence="2">1.14.-.-</ecNumber>
    </recommendedName>
    <alternativeName>
        <fullName evidence="5">Cytochrome P450 MycCI</fullName>
    </alternativeName>
    <alternativeName>
        <fullName evidence="7">Mycinamicin biosynthesis protein CI</fullName>
    </alternativeName>
</protein>
<sequence length="388" mass="43506">MVVWPMDRTCAWALPEQYAEFRQRATLVPAKVWDGSPTWLVSRYEHVRALLVDPRVTVDPTRQPRLSEADGDGDGFRSMLMLDPPEHTRLRRMFISAFSVRQVETMRPEIEKIVDGILDRLLALEPPVDILTHLALPMSTQVICHLLGVPYEDREFFQERSELASRPNDDRSMPALIELVEYLDGLVRTKTAHPDTGLLGTAVTERLLKGEITHQELVNNAVLLLAAGHETSANQVTLSVLTLLRHPETAAELREQPELMPNAVDELLRYHSIADGLRRAATADIVLGDHTIRAGDGLIILLSSANHDGNTFGAEATFDIHRPARHHVAFGYGPHQCLGQNLARLEMEVTLGKLFRRVPALRLAQEPDALRVRQGSPIFGIDELLVEW</sequence>
<evidence type="ECO:0000250" key="1">
    <source>
        <dbReference type="UniProtKB" id="P18326"/>
    </source>
</evidence>
<evidence type="ECO:0000269" key="2">
    <source>
    </source>
</evidence>
<evidence type="ECO:0000269" key="3">
    <source>
    </source>
</evidence>
<evidence type="ECO:0000303" key="4">
    <source>
    </source>
</evidence>
<evidence type="ECO:0000303" key="5">
    <source>
    </source>
</evidence>
<evidence type="ECO:0000305" key="6"/>
<evidence type="ECO:0000305" key="7">
    <source>
    </source>
</evidence>
<evidence type="ECO:0000305" key="8">
    <source>
    </source>
</evidence>
<evidence type="ECO:0007829" key="9">
    <source>
        <dbReference type="PDB" id="5FOI"/>
    </source>
</evidence>
<proteinExistence type="evidence at protein level"/>
<name>MYCCI_MICGR</name>